<accession>A2CC89</accession>
<evidence type="ECO:0000255" key="1">
    <source>
        <dbReference type="HAMAP-Rule" id="MF_00508"/>
    </source>
</evidence>
<evidence type="ECO:0000305" key="2"/>
<dbReference type="EMBL" id="CP000554">
    <property type="protein sequence ID" value="ABM79099.1"/>
    <property type="molecule type" value="Genomic_DNA"/>
</dbReference>
<dbReference type="RefSeq" id="WP_011131150.1">
    <property type="nucleotide sequence ID" value="NC_008820.1"/>
</dbReference>
<dbReference type="SMR" id="A2CC89"/>
<dbReference type="STRING" id="59922.P9303_23661"/>
<dbReference type="KEGG" id="pmf:P9303_23661"/>
<dbReference type="HOGENOM" id="CLU_122625_1_3_3"/>
<dbReference type="BioCyc" id="PMAR59922:G1G80-2079-MONOMER"/>
<dbReference type="Proteomes" id="UP000002274">
    <property type="component" value="Chromosome"/>
</dbReference>
<dbReference type="GO" id="GO:1990904">
    <property type="term" value="C:ribonucleoprotein complex"/>
    <property type="evidence" value="ECO:0007669"/>
    <property type="project" value="UniProtKB-KW"/>
</dbReference>
<dbReference type="GO" id="GO:0005840">
    <property type="term" value="C:ribosome"/>
    <property type="evidence" value="ECO:0007669"/>
    <property type="project" value="UniProtKB-KW"/>
</dbReference>
<dbReference type="GO" id="GO:0003735">
    <property type="term" value="F:structural constituent of ribosome"/>
    <property type="evidence" value="ECO:0007669"/>
    <property type="project" value="InterPro"/>
</dbReference>
<dbReference type="GO" id="GO:0000049">
    <property type="term" value="F:tRNA binding"/>
    <property type="evidence" value="ECO:0007669"/>
    <property type="project" value="UniProtKB-UniRule"/>
</dbReference>
<dbReference type="GO" id="GO:0006412">
    <property type="term" value="P:translation"/>
    <property type="evidence" value="ECO:0007669"/>
    <property type="project" value="UniProtKB-UniRule"/>
</dbReference>
<dbReference type="FunFam" id="3.30.70.600:FF:000001">
    <property type="entry name" value="30S ribosomal protein S10"/>
    <property type="match status" value="1"/>
</dbReference>
<dbReference type="Gene3D" id="3.30.70.600">
    <property type="entry name" value="Ribosomal protein S10 domain"/>
    <property type="match status" value="1"/>
</dbReference>
<dbReference type="HAMAP" id="MF_00508">
    <property type="entry name" value="Ribosomal_uS10"/>
    <property type="match status" value="1"/>
</dbReference>
<dbReference type="InterPro" id="IPR001848">
    <property type="entry name" value="Ribosomal_uS10"/>
</dbReference>
<dbReference type="InterPro" id="IPR027486">
    <property type="entry name" value="Ribosomal_uS10_dom"/>
</dbReference>
<dbReference type="InterPro" id="IPR036838">
    <property type="entry name" value="Ribosomal_uS10_dom_sf"/>
</dbReference>
<dbReference type="NCBIfam" id="NF001861">
    <property type="entry name" value="PRK00596.1"/>
    <property type="match status" value="1"/>
</dbReference>
<dbReference type="NCBIfam" id="TIGR01049">
    <property type="entry name" value="rpsJ_bact"/>
    <property type="match status" value="1"/>
</dbReference>
<dbReference type="PANTHER" id="PTHR11700">
    <property type="entry name" value="30S RIBOSOMAL PROTEIN S10 FAMILY MEMBER"/>
    <property type="match status" value="1"/>
</dbReference>
<dbReference type="Pfam" id="PF00338">
    <property type="entry name" value="Ribosomal_S10"/>
    <property type="match status" value="1"/>
</dbReference>
<dbReference type="PRINTS" id="PR00971">
    <property type="entry name" value="RIBOSOMALS10"/>
</dbReference>
<dbReference type="SMART" id="SM01403">
    <property type="entry name" value="Ribosomal_S10"/>
    <property type="match status" value="1"/>
</dbReference>
<dbReference type="SUPFAM" id="SSF54999">
    <property type="entry name" value="Ribosomal protein S10"/>
    <property type="match status" value="1"/>
</dbReference>
<comment type="function">
    <text evidence="1">Involved in the binding of tRNA to the ribosomes.</text>
</comment>
<comment type="subunit">
    <text evidence="1">Part of the 30S ribosomal subunit.</text>
</comment>
<comment type="similarity">
    <text evidence="1">Belongs to the universal ribosomal protein uS10 family.</text>
</comment>
<protein>
    <recommendedName>
        <fullName evidence="1">Small ribosomal subunit protein uS10</fullName>
    </recommendedName>
    <alternativeName>
        <fullName evidence="2">30S ribosomal protein S10</fullName>
    </alternativeName>
</protein>
<proteinExistence type="inferred from homology"/>
<keyword id="KW-0687">Ribonucleoprotein</keyword>
<keyword id="KW-0689">Ribosomal protein</keyword>
<name>RS10_PROM3</name>
<feature type="chain" id="PRO_1000015080" description="Small ribosomal subunit protein uS10">
    <location>
        <begin position="1"/>
        <end position="106"/>
    </location>
</feature>
<reference key="1">
    <citation type="journal article" date="2007" name="PLoS Genet.">
        <title>Patterns and implications of gene gain and loss in the evolution of Prochlorococcus.</title>
        <authorList>
            <person name="Kettler G.C."/>
            <person name="Martiny A.C."/>
            <person name="Huang K."/>
            <person name="Zucker J."/>
            <person name="Coleman M.L."/>
            <person name="Rodrigue S."/>
            <person name="Chen F."/>
            <person name="Lapidus A."/>
            <person name="Ferriera S."/>
            <person name="Johnson J."/>
            <person name="Steglich C."/>
            <person name="Church G.M."/>
            <person name="Richardson P."/>
            <person name="Chisholm S.W."/>
        </authorList>
    </citation>
    <scope>NUCLEOTIDE SEQUENCE [LARGE SCALE GENOMIC DNA]</scope>
    <source>
        <strain>MIT 9303</strain>
    </source>
</reference>
<gene>
    <name evidence="1" type="primary">rpsJ</name>
    <name evidence="1" type="synonym">rps10</name>
    <name type="ordered locus">P9303_23661</name>
</gene>
<organism>
    <name type="scientific">Prochlorococcus marinus (strain MIT 9303)</name>
    <dbReference type="NCBI Taxonomy" id="59922"/>
    <lineage>
        <taxon>Bacteria</taxon>
        <taxon>Bacillati</taxon>
        <taxon>Cyanobacteriota</taxon>
        <taxon>Cyanophyceae</taxon>
        <taxon>Synechococcales</taxon>
        <taxon>Prochlorococcaceae</taxon>
        <taxon>Prochlorococcus</taxon>
    </lineage>
</organism>
<sequence>MSTAIAQQKIRIRLKAFDRRMLDLSCDKIIETADNTAATAIGPIPLPTKRKIYCVLCSPHVDKDSREHFETRTHRRIIDIYNPSAKTIDALMKLDLPSGVDIEVKL</sequence>